<comment type="function">
    <text evidence="2">Catalyzes the transfer of the enolpyruvyl moiety of phosphoenolpyruvate (PEP) to the 5-hydroxyl of shikimate-3-phosphate (S3P) to produce enolpyruvyl shikimate-3-phosphate and inorganic phosphate.</text>
</comment>
<comment type="catalytic activity">
    <reaction evidence="2">
        <text>3-phosphoshikimate + phosphoenolpyruvate = 5-O-(1-carboxyvinyl)-3-phosphoshikimate + phosphate</text>
        <dbReference type="Rhea" id="RHEA:21256"/>
        <dbReference type="ChEBI" id="CHEBI:43474"/>
        <dbReference type="ChEBI" id="CHEBI:57701"/>
        <dbReference type="ChEBI" id="CHEBI:58702"/>
        <dbReference type="ChEBI" id="CHEBI:145989"/>
        <dbReference type="EC" id="2.5.1.19"/>
    </reaction>
    <physiologicalReaction direction="left-to-right" evidence="2">
        <dbReference type="Rhea" id="RHEA:21257"/>
    </physiologicalReaction>
</comment>
<comment type="pathway">
    <text evidence="2">Metabolic intermediate biosynthesis; chorismate biosynthesis; chorismate from D-erythrose 4-phosphate and phosphoenolpyruvate: step 6/7.</text>
</comment>
<comment type="subcellular location">
    <subcellularLocation>
        <location>Plastid</location>
        <location>Chloroplast</location>
    </subcellularLocation>
</comment>
<comment type="miscellaneous">
    <text>This enzyme is the target of the potent, broad-spectrum herbicide, glyphosate [n-(phosphonomethyl)glycine]. Overproduction of EPSP leads to glyphosate tolerance.</text>
</comment>
<comment type="similarity">
    <text evidence="4">Belongs to the EPSP synthase family.</text>
</comment>
<keyword id="KW-0028">Amino-acid biosynthesis</keyword>
<keyword id="KW-0057">Aromatic amino acid biosynthesis</keyword>
<keyword id="KW-0150">Chloroplast</keyword>
<keyword id="KW-0934">Plastid</keyword>
<keyword id="KW-1185">Reference proteome</keyword>
<keyword id="KW-0808">Transferase</keyword>
<keyword id="KW-0809">Transit peptide</keyword>
<gene>
    <name type="primary">EPSPS-1</name>
</gene>
<accession>P23981</accession>
<sequence length="518" mass="55711">MAQISSMGQGIRTPNLNSYLPKTQKVPLFSHSIFIGSKKITQNSAKSLWVSKEDSVLRVAKSPFRISASVVTAQKPNEIVLQPIKDISGTVKLPGSKSLSNRILLLAALSKGRTVVDNLLSSDDIHYMLGALKTLGLHVEDDNENQRAIVEGCGGQFPVGKKSEEEIQLFLGNAGTAMRPLTAAVTVAGGHSRYVLDGVPRMRERPIGDLVDGLKQLGAEVDCFLGTNCPPVRIVSKGGLPGGKVKLSGSISSQYLTALLMAAPLALGDVEIEIIDKLISVPYVEMTLKLMERFGVSVEHTSSWDKFLVRGGQKYKSPGKAYVEGDASSASYFLAGAAVTGGTVTVEGCGTSSLQGDVKFAEVLEKMGAEVTWTENSVTVKGPPRNSSGMKHLRAVDVNMNKMPDVAMTLAVVALFADGPTAIRDVASWRVKETERMIAICTELRKLGATVVEGSDYCIITPPEKLNVTEIDTYDDHRMAMAFSLAACADVPVTIKDPGCTRKTFPNYFDVLQQYSKH</sequence>
<evidence type="ECO:0000250" key="1">
    <source>
        <dbReference type="UniProtKB" id="P0A6D3"/>
    </source>
</evidence>
<evidence type="ECO:0000250" key="2">
    <source>
        <dbReference type="UniProtKB" id="P11043"/>
    </source>
</evidence>
<evidence type="ECO:0000250" key="3">
    <source>
        <dbReference type="UniProtKB" id="P9WPY5"/>
    </source>
</evidence>
<evidence type="ECO:0000305" key="4"/>
<organism>
    <name type="scientific">Nicotiana tabacum</name>
    <name type="common">Common tobacco</name>
    <dbReference type="NCBI Taxonomy" id="4097"/>
    <lineage>
        <taxon>Eukaryota</taxon>
        <taxon>Viridiplantae</taxon>
        <taxon>Streptophyta</taxon>
        <taxon>Embryophyta</taxon>
        <taxon>Tracheophyta</taxon>
        <taxon>Spermatophyta</taxon>
        <taxon>Magnoliopsida</taxon>
        <taxon>eudicotyledons</taxon>
        <taxon>Gunneridae</taxon>
        <taxon>Pentapetalae</taxon>
        <taxon>asterids</taxon>
        <taxon>lamiids</taxon>
        <taxon>Solanales</taxon>
        <taxon>Solanaceae</taxon>
        <taxon>Nicotianoideae</taxon>
        <taxon>Nicotianeae</taxon>
        <taxon>Nicotiana</taxon>
    </lineage>
</organism>
<dbReference type="EC" id="2.5.1.19" evidence="2"/>
<dbReference type="EMBL" id="M61904">
    <property type="protein sequence ID" value="AAA34071.1"/>
    <property type="molecule type" value="mRNA"/>
</dbReference>
<dbReference type="PIR" id="S18353">
    <property type="entry name" value="S18353"/>
</dbReference>
<dbReference type="RefSeq" id="NP_001312842.1">
    <property type="nucleotide sequence ID" value="NM_001325913.1"/>
</dbReference>
<dbReference type="SMR" id="P23981"/>
<dbReference type="STRING" id="4097.P23981"/>
<dbReference type="PaxDb" id="4097-P23981"/>
<dbReference type="ProMEX" id="P23981"/>
<dbReference type="GeneID" id="107813883"/>
<dbReference type="KEGG" id="nta:107813883"/>
<dbReference type="OrthoDB" id="1269198at2759"/>
<dbReference type="PhylomeDB" id="P23981"/>
<dbReference type="UniPathway" id="UPA00053">
    <property type="reaction ID" value="UER00089"/>
</dbReference>
<dbReference type="Proteomes" id="UP000084051">
    <property type="component" value="Unplaced"/>
</dbReference>
<dbReference type="GO" id="GO:0009507">
    <property type="term" value="C:chloroplast"/>
    <property type="evidence" value="ECO:0007669"/>
    <property type="project" value="UniProtKB-SubCell"/>
</dbReference>
<dbReference type="GO" id="GO:0003866">
    <property type="term" value="F:3-phosphoshikimate 1-carboxyvinyltransferase activity"/>
    <property type="evidence" value="ECO:0000318"/>
    <property type="project" value="GO_Central"/>
</dbReference>
<dbReference type="GO" id="GO:0008652">
    <property type="term" value="P:amino acid biosynthetic process"/>
    <property type="evidence" value="ECO:0007669"/>
    <property type="project" value="UniProtKB-KW"/>
</dbReference>
<dbReference type="GO" id="GO:0009073">
    <property type="term" value="P:aromatic amino acid family biosynthetic process"/>
    <property type="evidence" value="ECO:0007669"/>
    <property type="project" value="UniProtKB-KW"/>
</dbReference>
<dbReference type="GO" id="GO:0009423">
    <property type="term" value="P:chorismate biosynthetic process"/>
    <property type="evidence" value="ECO:0000318"/>
    <property type="project" value="GO_Central"/>
</dbReference>
<dbReference type="CDD" id="cd01556">
    <property type="entry name" value="EPSP_synthase"/>
    <property type="match status" value="1"/>
</dbReference>
<dbReference type="FunFam" id="3.65.10.10:FF:000004">
    <property type="entry name" value="3-phosphoshikimate 1-carboxyvinyltransferase"/>
    <property type="match status" value="1"/>
</dbReference>
<dbReference type="FunFam" id="3.65.10.10:FF:000009">
    <property type="entry name" value="3-phosphoshikimate 1-carboxyvinyltransferase"/>
    <property type="match status" value="1"/>
</dbReference>
<dbReference type="Gene3D" id="3.65.10.10">
    <property type="entry name" value="Enolpyruvate transferase domain"/>
    <property type="match status" value="2"/>
</dbReference>
<dbReference type="HAMAP" id="MF_00210">
    <property type="entry name" value="EPSP_synth"/>
    <property type="match status" value="1"/>
</dbReference>
<dbReference type="InterPro" id="IPR001986">
    <property type="entry name" value="Enolpyruvate_Tfrase_dom"/>
</dbReference>
<dbReference type="InterPro" id="IPR036968">
    <property type="entry name" value="Enolpyruvate_Tfrase_sf"/>
</dbReference>
<dbReference type="InterPro" id="IPR006264">
    <property type="entry name" value="EPSP_synthase"/>
</dbReference>
<dbReference type="InterPro" id="IPR023193">
    <property type="entry name" value="EPSP_synthase_CS"/>
</dbReference>
<dbReference type="InterPro" id="IPR013792">
    <property type="entry name" value="RNA3'P_cycl/enolpyr_Trfase_a/b"/>
</dbReference>
<dbReference type="NCBIfam" id="TIGR01356">
    <property type="entry name" value="aroA"/>
    <property type="match status" value="1"/>
</dbReference>
<dbReference type="PANTHER" id="PTHR21090">
    <property type="entry name" value="AROM/DEHYDROQUINATE SYNTHASE"/>
    <property type="match status" value="1"/>
</dbReference>
<dbReference type="PANTHER" id="PTHR21090:SF5">
    <property type="entry name" value="PENTAFUNCTIONAL AROM POLYPEPTIDE"/>
    <property type="match status" value="1"/>
</dbReference>
<dbReference type="Pfam" id="PF00275">
    <property type="entry name" value="EPSP_synthase"/>
    <property type="match status" value="1"/>
</dbReference>
<dbReference type="SUPFAM" id="SSF55205">
    <property type="entry name" value="EPT/RTPC-like"/>
    <property type="match status" value="1"/>
</dbReference>
<dbReference type="PROSITE" id="PS00104">
    <property type="entry name" value="EPSP_SYNTHASE_1"/>
    <property type="match status" value="1"/>
</dbReference>
<dbReference type="PROSITE" id="PS00885">
    <property type="entry name" value="EPSP_SYNTHASE_2"/>
    <property type="match status" value="1"/>
</dbReference>
<protein>
    <recommendedName>
        <fullName>3-phosphoshikimate 1-carboxyvinyltransferase 1, chloroplastic</fullName>
        <ecNumber evidence="2">2.5.1.19</ecNumber>
    </recommendedName>
    <alternativeName>
        <fullName>5-enolpyruvylshikimate-3-phosphate synthase 1</fullName>
        <shortName>EPSP synthase 1</shortName>
    </alternativeName>
</protein>
<proteinExistence type="evidence at transcript level"/>
<reference key="1">
    <citation type="journal article" date="1991" name="Plant Mol. Biol.">
        <title>Expression and stability of amplified genes encoding 5-enolpyruvylshikimate-3-phosphate synthase in glyphosate-tolerant tobacco cells.</title>
        <authorList>
            <person name="Wang Y."/>
            <person name="Jones J."/>
            <person name="Weller S."/>
            <person name="Goldsbrough P.B."/>
        </authorList>
    </citation>
    <scope>NUCLEOTIDE SEQUENCE [MRNA]</scope>
</reference>
<feature type="transit peptide" description="Chloroplast">
    <location>
        <begin position="1"/>
        <end position="74"/>
    </location>
</feature>
<feature type="chain" id="PRO_0000460362" description="3-phosphoshikimate 1-carboxyvinyltransferase 1, chloroplastic">
    <location>
        <begin position="75"/>
        <end position="518"/>
    </location>
</feature>
<feature type="active site" description="Proton acceptor" evidence="1">
    <location>
        <position position="405"/>
    </location>
</feature>
<feature type="binding site" evidence="1">
    <location>
        <position position="97"/>
    </location>
    <ligand>
        <name>3-phosphoshikimate</name>
        <dbReference type="ChEBI" id="CHEBI:145989"/>
    </ligand>
</feature>
<feature type="binding site" evidence="3">
    <location>
        <position position="97"/>
    </location>
    <ligand>
        <name>phosphoenolpyruvate</name>
        <dbReference type="ChEBI" id="CHEBI:58702"/>
    </ligand>
</feature>
<feature type="binding site" evidence="1">
    <location>
        <position position="98"/>
    </location>
    <ligand>
        <name>3-phosphoshikimate</name>
        <dbReference type="ChEBI" id="CHEBI:145989"/>
    </ligand>
</feature>
<feature type="binding site" evidence="1">
    <location>
        <position position="102"/>
    </location>
    <ligand>
        <name>3-phosphoshikimate</name>
        <dbReference type="ChEBI" id="CHEBI:145989"/>
    </ligand>
</feature>
<feature type="binding site" evidence="3">
    <location>
        <position position="175"/>
    </location>
    <ligand>
        <name>phosphoenolpyruvate</name>
        <dbReference type="ChEBI" id="CHEBI:58702"/>
    </ligand>
</feature>
<feature type="binding site" evidence="3">
    <location>
        <position position="205"/>
    </location>
    <ligand>
        <name>phosphoenolpyruvate</name>
        <dbReference type="ChEBI" id="CHEBI:58702"/>
    </ligand>
</feature>
<feature type="binding site" evidence="1">
    <location>
        <position position="252"/>
    </location>
    <ligand>
        <name>3-phosphoshikimate</name>
        <dbReference type="ChEBI" id="CHEBI:145989"/>
    </ligand>
</feature>
<feature type="binding site" evidence="1">
    <location>
        <position position="253"/>
    </location>
    <ligand>
        <name>3-phosphoshikimate</name>
        <dbReference type="ChEBI" id="CHEBI:145989"/>
    </ligand>
</feature>
<feature type="binding site" evidence="1">
    <location>
        <position position="254"/>
    </location>
    <ligand>
        <name>3-phosphoshikimate</name>
        <dbReference type="ChEBI" id="CHEBI:145989"/>
    </ligand>
</feature>
<feature type="binding site" evidence="3">
    <location>
        <position position="254"/>
    </location>
    <ligand>
        <name>phosphoenolpyruvate</name>
        <dbReference type="ChEBI" id="CHEBI:58702"/>
    </ligand>
</feature>
<feature type="binding site" evidence="1">
    <location>
        <position position="280"/>
    </location>
    <ligand>
        <name>3-phosphoshikimate</name>
        <dbReference type="ChEBI" id="CHEBI:145989"/>
    </ligand>
</feature>
<feature type="binding site" evidence="1">
    <location>
        <position position="405"/>
    </location>
    <ligand>
        <name>3-phosphoshikimate</name>
        <dbReference type="ChEBI" id="CHEBI:145989"/>
    </ligand>
</feature>
<feature type="binding site" evidence="1">
    <location>
        <position position="432"/>
    </location>
    <ligand>
        <name>3-phosphoshikimate</name>
        <dbReference type="ChEBI" id="CHEBI:145989"/>
    </ligand>
</feature>
<feature type="binding site" evidence="3">
    <location>
        <position position="436"/>
    </location>
    <ligand>
        <name>phosphoenolpyruvate</name>
        <dbReference type="ChEBI" id="CHEBI:58702"/>
    </ligand>
</feature>
<feature type="binding site" evidence="3">
    <location>
        <position position="478"/>
    </location>
    <ligand>
        <name>phosphoenolpyruvate</name>
        <dbReference type="ChEBI" id="CHEBI:58702"/>
    </ligand>
</feature>
<feature type="binding site" evidence="3">
    <location>
        <position position="503"/>
    </location>
    <ligand>
        <name>phosphoenolpyruvate</name>
        <dbReference type="ChEBI" id="CHEBI:58702"/>
    </ligand>
</feature>
<name>AROA1_TOBAC</name>